<sequence length="159" mass="18010">MKIKLICVGKLKEAYLRDGIAEYQKRLSRFCQCDIIELADEKTPDKASHAEKQQIMAKEADRIKKKLGQRDFVIALAIEGKQLASEQFSHLLSEVTVKGYSDIAFVIGGSLGLDQSIKNRANLLMSFGLLTLPHQLMRLVLIEQVYRAFMIQQGSPYHK</sequence>
<proteinExistence type="inferred from homology"/>
<keyword id="KW-0963">Cytoplasm</keyword>
<keyword id="KW-0489">Methyltransferase</keyword>
<keyword id="KW-0698">rRNA processing</keyword>
<keyword id="KW-0949">S-adenosyl-L-methionine</keyword>
<keyword id="KW-0808">Transferase</keyword>
<evidence type="ECO:0000255" key="1">
    <source>
        <dbReference type="HAMAP-Rule" id="MF_00658"/>
    </source>
</evidence>
<gene>
    <name evidence="1" type="primary">rlmH</name>
    <name type="ordered locus">SEQ_2236</name>
</gene>
<reference key="1">
    <citation type="journal article" date="2009" name="PLoS Pathog.">
        <title>Genomic evidence for the evolution of Streptococcus equi: host restriction, increased virulence, and genetic exchange with human pathogens.</title>
        <authorList>
            <person name="Holden M.T.G."/>
            <person name="Heather Z."/>
            <person name="Paillot R."/>
            <person name="Steward K.F."/>
            <person name="Webb K."/>
            <person name="Ainslie F."/>
            <person name="Jourdan T."/>
            <person name="Bason N.C."/>
            <person name="Holroyd N.E."/>
            <person name="Mungall K."/>
            <person name="Quail M.A."/>
            <person name="Sanders M."/>
            <person name="Simmonds M."/>
            <person name="Willey D."/>
            <person name="Brooks K."/>
            <person name="Aanensen D.M."/>
            <person name="Spratt B.G."/>
            <person name="Jolley K.A."/>
            <person name="Maiden M.C.J."/>
            <person name="Kehoe M."/>
            <person name="Chanter N."/>
            <person name="Bentley S.D."/>
            <person name="Robinson C."/>
            <person name="Maskell D.J."/>
            <person name="Parkhill J."/>
            <person name="Waller A.S."/>
        </authorList>
    </citation>
    <scope>NUCLEOTIDE SEQUENCE [LARGE SCALE GENOMIC DNA]</scope>
    <source>
        <strain>4047</strain>
    </source>
</reference>
<name>RLMH_STRE4</name>
<protein>
    <recommendedName>
        <fullName evidence="1">Ribosomal RNA large subunit methyltransferase H</fullName>
        <ecNumber evidence="1">2.1.1.177</ecNumber>
    </recommendedName>
    <alternativeName>
        <fullName evidence="1">23S rRNA (pseudouridine1915-N3)-methyltransferase</fullName>
    </alternativeName>
    <alternativeName>
        <fullName evidence="1">23S rRNA m3Psi1915 methyltransferase</fullName>
    </alternativeName>
    <alternativeName>
        <fullName evidence="1">rRNA (pseudouridine-N3-)-methyltransferase RlmH</fullName>
    </alternativeName>
</protein>
<dbReference type="EC" id="2.1.1.177" evidence="1"/>
<dbReference type="EMBL" id="FM204883">
    <property type="protein sequence ID" value="CAW95662.1"/>
    <property type="molecule type" value="Genomic_DNA"/>
</dbReference>
<dbReference type="RefSeq" id="WP_012678751.1">
    <property type="nucleotide sequence ID" value="NC_012471.1"/>
</dbReference>
<dbReference type="SMR" id="C0MBH4"/>
<dbReference type="KEGG" id="seu:SEQ_2236"/>
<dbReference type="HOGENOM" id="CLU_100552_0_0_9"/>
<dbReference type="OrthoDB" id="9806643at2"/>
<dbReference type="Proteomes" id="UP000001365">
    <property type="component" value="Chromosome"/>
</dbReference>
<dbReference type="GO" id="GO:0005737">
    <property type="term" value="C:cytoplasm"/>
    <property type="evidence" value="ECO:0007669"/>
    <property type="project" value="UniProtKB-SubCell"/>
</dbReference>
<dbReference type="GO" id="GO:0070038">
    <property type="term" value="F:rRNA (pseudouridine-N3-)-methyltransferase activity"/>
    <property type="evidence" value="ECO:0007669"/>
    <property type="project" value="UniProtKB-UniRule"/>
</dbReference>
<dbReference type="CDD" id="cd18081">
    <property type="entry name" value="RlmH-like"/>
    <property type="match status" value="1"/>
</dbReference>
<dbReference type="Gene3D" id="3.40.1280.10">
    <property type="match status" value="1"/>
</dbReference>
<dbReference type="HAMAP" id="MF_00658">
    <property type="entry name" value="23SrRNA_methyltr_H"/>
    <property type="match status" value="1"/>
</dbReference>
<dbReference type="InterPro" id="IPR029028">
    <property type="entry name" value="Alpha/beta_knot_MTases"/>
</dbReference>
<dbReference type="InterPro" id="IPR003742">
    <property type="entry name" value="RlmH-like"/>
</dbReference>
<dbReference type="InterPro" id="IPR029026">
    <property type="entry name" value="tRNA_m1G_MTases_N"/>
</dbReference>
<dbReference type="NCBIfam" id="NF000985">
    <property type="entry name" value="PRK00103.1-3"/>
    <property type="match status" value="1"/>
</dbReference>
<dbReference type="NCBIfam" id="TIGR00246">
    <property type="entry name" value="tRNA_RlmH_YbeA"/>
    <property type="match status" value="1"/>
</dbReference>
<dbReference type="PANTHER" id="PTHR33603">
    <property type="entry name" value="METHYLTRANSFERASE"/>
    <property type="match status" value="1"/>
</dbReference>
<dbReference type="PANTHER" id="PTHR33603:SF1">
    <property type="entry name" value="RIBOSOMAL RNA LARGE SUBUNIT METHYLTRANSFERASE H"/>
    <property type="match status" value="1"/>
</dbReference>
<dbReference type="Pfam" id="PF02590">
    <property type="entry name" value="SPOUT_MTase"/>
    <property type="match status" value="1"/>
</dbReference>
<dbReference type="PIRSF" id="PIRSF004505">
    <property type="entry name" value="MT_bac"/>
    <property type="match status" value="1"/>
</dbReference>
<dbReference type="SUPFAM" id="SSF75217">
    <property type="entry name" value="alpha/beta knot"/>
    <property type="match status" value="1"/>
</dbReference>
<feature type="chain" id="PRO_1000199830" description="Ribosomal RNA large subunit methyltransferase H">
    <location>
        <begin position="1"/>
        <end position="159"/>
    </location>
</feature>
<feature type="binding site" evidence="1">
    <location>
        <position position="76"/>
    </location>
    <ligand>
        <name>S-adenosyl-L-methionine</name>
        <dbReference type="ChEBI" id="CHEBI:59789"/>
    </ligand>
</feature>
<feature type="binding site" evidence="1">
    <location>
        <position position="108"/>
    </location>
    <ligand>
        <name>S-adenosyl-L-methionine</name>
        <dbReference type="ChEBI" id="CHEBI:59789"/>
    </ligand>
</feature>
<feature type="binding site" evidence="1">
    <location>
        <begin position="127"/>
        <end position="132"/>
    </location>
    <ligand>
        <name>S-adenosyl-L-methionine</name>
        <dbReference type="ChEBI" id="CHEBI:59789"/>
    </ligand>
</feature>
<organism>
    <name type="scientific">Streptococcus equi subsp. equi (strain 4047)</name>
    <dbReference type="NCBI Taxonomy" id="553482"/>
    <lineage>
        <taxon>Bacteria</taxon>
        <taxon>Bacillati</taxon>
        <taxon>Bacillota</taxon>
        <taxon>Bacilli</taxon>
        <taxon>Lactobacillales</taxon>
        <taxon>Streptococcaceae</taxon>
        <taxon>Streptococcus</taxon>
    </lineage>
</organism>
<accession>C0MBH4</accession>
<comment type="function">
    <text evidence="1">Specifically methylates the pseudouridine at position 1915 (m3Psi1915) in 23S rRNA.</text>
</comment>
<comment type="catalytic activity">
    <reaction evidence="1">
        <text>pseudouridine(1915) in 23S rRNA + S-adenosyl-L-methionine = N(3)-methylpseudouridine(1915) in 23S rRNA + S-adenosyl-L-homocysteine + H(+)</text>
        <dbReference type="Rhea" id="RHEA:42752"/>
        <dbReference type="Rhea" id="RHEA-COMP:10221"/>
        <dbReference type="Rhea" id="RHEA-COMP:10222"/>
        <dbReference type="ChEBI" id="CHEBI:15378"/>
        <dbReference type="ChEBI" id="CHEBI:57856"/>
        <dbReference type="ChEBI" id="CHEBI:59789"/>
        <dbReference type="ChEBI" id="CHEBI:65314"/>
        <dbReference type="ChEBI" id="CHEBI:74486"/>
        <dbReference type="EC" id="2.1.1.177"/>
    </reaction>
</comment>
<comment type="subunit">
    <text evidence="1">Homodimer.</text>
</comment>
<comment type="subcellular location">
    <subcellularLocation>
        <location evidence="1">Cytoplasm</location>
    </subcellularLocation>
</comment>
<comment type="similarity">
    <text evidence="1">Belongs to the RNA methyltransferase RlmH family.</text>
</comment>